<dbReference type="EC" id="2.7.2.1" evidence="1"/>
<dbReference type="EMBL" id="AM295007">
    <property type="protein sequence ID" value="CAM29434.1"/>
    <property type="molecule type" value="Genomic_DNA"/>
</dbReference>
<dbReference type="RefSeq" id="WP_011888536.1">
    <property type="nucleotide sequence ID" value="NC_009332.1"/>
</dbReference>
<dbReference type="SMR" id="A2RC62"/>
<dbReference type="KEGG" id="spf:SpyM50092"/>
<dbReference type="HOGENOM" id="CLU_020352_0_1_9"/>
<dbReference type="UniPathway" id="UPA00340">
    <property type="reaction ID" value="UER00458"/>
</dbReference>
<dbReference type="GO" id="GO:0005737">
    <property type="term" value="C:cytoplasm"/>
    <property type="evidence" value="ECO:0007669"/>
    <property type="project" value="UniProtKB-SubCell"/>
</dbReference>
<dbReference type="GO" id="GO:0008776">
    <property type="term" value="F:acetate kinase activity"/>
    <property type="evidence" value="ECO:0007669"/>
    <property type="project" value="UniProtKB-UniRule"/>
</dbReference>
<dbReference type="GO" id="GO:0005524">
    <property type="term" value="F:ATP binding"/>
    <property type="evidence" value="ECO:0007669"/>
    <property type="project" value="UniProtKB-KW"/>
</dbReference>
<dbReference type="GO" id="GO:0000287">
    <property type="term" value="F:magnesium ion binding"/>
    <property type="evidence" value="ECO:0007669"/>
    <property type="project" value="UniProtKB-UniRule"/>
</dbReference>
<dbReference type="GO" id="GO:0006083">
    <property type="term" value="P:acetate metabolic process"/>
    <property type="evidence" value="ECO:0007669"/>
    <property type="project" value="TreeGrafter"/>
</dbReference>
<dbReference type="GO" id="GO:0006085">
    <property type="term" value="P:acetyl-CoA biosynthetic process"/>
    <property type="evidence" value="ECO:0007669"/>
    <property type="project" value="UniProtKB-UniRule"/>
</dbReference>
<dbReference type="CDD" id="cd24010">
    <property type="entry name" value="ASKHA_NBD_AcK_PK"/>
    <property type="match status" value="1"/>
</dbReference>
<dbReference type="Gene3D" id="3.30.420.40">
    <property type="match status" value="2"/>
</dbReference>
<dbReference type="HAMAP" id="MF_00020">
    <property type="entry name" value="Acetate_kinase"/>
    <property type="match status" value="1"/>
</dbReference>
<dbReference type="InterPro" id="IPR004372">
    <property type="entry name" value="Ac/propionate_kinase"/>
</dbReference>
<dbReference type="InterPro" id="IPR000890">
    <property type="entry name" value="Aliphatic_acid_kin_short-chain"/>
</dbReference>
<dbReference type="InterPro" id="IPR023865">
    <property type="entry name" value="Aliphatic_acid_kinase_CS"/>
</dbReference>
<dbReference type="InterPro" id="IPR043129">
    <property type="entry name" value="ATPase_NBD"/>
</dbReference>
<dbReference type="NCBIfam" id="TIGR00016">
    <property type="entry name" value="ackA"/>
    <property type="match status" value="1"/>
</dbReference>
<dbReference type="PANTHER" id="PTHR21060">
    <property type="entry name" value="ACETATE KINASE"/>
    <property type="match status" value="1"/>
</dbReference>
<dbReference type="PANTHER" id="PTHR21060:SF15">
    <property type="entry name" value="ACETATE KINASE-RELATED"/>
    <property type="match status" value="1"/>
</dbReference>
<dbReference type="Pfam" id="PF00871">
    <property type="entry name" value="Acetate_kinase"/>
    <property type="match status" value="1"/>
</dbReference>
<dbReference type="PIRSF" id="PIRSF000722">
    <property type="entry name" value="Acetate_prop_kin"/>
    <property type="match status" value="1"/>
</dbReference>
<dbReference type="PRINTS" id="PR00471">
    <property type="entry name" value="ACETATEKNASE"/>
</dbReference>
<dbReference type="SUPFAM" id="SSF53067">
    <property type="entry name" value="Actin-like ATPase domain"/>
    <property type="match status" value="2"/>
</dbReference>
<dbReference type="PROSITE" id="PS01075">
    <property type="entry name" value="ACETATE_KINASE_1"/>
    <property type="match status" value="1"/>
</dbReference>
<dbReference type="PROSITE" id="PS01076">
    <property type="entry name" value="ACETATE_KINASE_2"/>
    <property type="match status" value="1"/>
</dbReference>
<feature type="chain" id="PRO_1000002274" description="Acetate kinase">
    <location>
        <begin position="1"/>
        <end position="398"/>
    </location>
</feature>
<feature type="active site" description="Proton donor/acceptor" evidence="1">
    <location>
        <position position="146"/>
    </location>
</feature>
<feature type="binding site" evidence="1">
    <location>
        <position position="8"/>
    </location>
    <ligand>
        <name>Mg(2+)</name>
        <dbReference type="ChEBI" id="CHEBI:18420"/>
    </ligand>
</feature>
<feature type="binding site" evidence="1">
    <location>
        <position position="15"/>
    </location>
    <ligand>
        <name>ATP</name>
        <dbReference type="ChEBI" id="CHEBI:30616"/>
    </ligand>
</feature>
<feature type="binding site" evidence="1">
    <location>
        <position position="89"/>
    </location>
    <ligand>
        <name>substrate</name>
    </ligand>
</feature>
<feature type="binding site" evidence="1">
    <location>
        <begin position="206"/>
        <end position="210"/>
    </location>
    <ligand>
        <name>ATP</name>
        <dbReference type="ChEBI" id="CHEBI:30616"/>
    </ligand>
</feature>
<feature type="binding site" evidence="1">
    <location>
        <begin position="283"/>
        <end position="285"/>
    </location>
    <ligand>
        <name>ATP</name>
        <dbReference type="ChEBI" id="CHEBI:30616"/>
    </ligand>
</feature>
<feature type="binding site" evidence="1">
    <location>
        <begin position="331"/>
        <end position="335"/>
    </location>
    <ligand>
        <name>ATP</name>
        <dbReference type="ChEBI" id="CHEBI:30616"/>
    </ligand>
</feature>
<feature type="binding site" evidence="1">
    <location>
        <position position="383"/>
    </location>
    <ligand>
        <name>Mg(2+)</name>
        <dbReference type="ChEBI" id="CHEBI:18420"/>
    </ligand>
</feature>
<feature type="site" description="Transition state stabilizer" evidence="1">
    <location>
        <position position="178"/>
    </location>
</feature>
<feature type="site" description="Transition state stabilizer" evidence="1">
    <location>
        <position position="239"/>
    </location>
</feature>
<organism>
    <name type="scientific">Streptococcus pyogenes serotype M5 (strain Manfredo)</name>
    <dbReference type="NCBI Taxonomy" id="160491"/>
    <lineage>
        <taxon>Bacteria</taxon>
        <taxon>Bacillati</taxon>
        <taxon>Bacillota</taxon>
        <taxon>Bacilli</taxon>
        <taxon>Lactobacillales</taxon>
        <taxon>Streptococcaceae</taxon>
        <taxon>Streptococcus</taxon>
    </lineage>
</organism>
<keyword id="KW-0067">ATP-binding</keyword>
<keyword id="KW-0963">Cytoplasm</keyword>
<keyword id="KW-0418">Kinase</keyword>
<keyword id="KW-0460">Magnesium</keyword>
<keyword id="KW-0479">Metal-binding</keyword>
<keyword id="KW-0547">Nucleotide-binding</keyword>
<keyword id="KW-0808">Transferase</keyword>
<evidence type="ECO:0000255" key="1">
    <source>
        <dbReference type="HAMAP-Rule" id="MF_00020"/>
    </source>
</evidence>
<protein>
    <recommendedName>
        <fullName evidence="1">Acetate kinase</fullName>
        <ecNumber evidence="1">2.7.2.1</ecNumber>
    </recommendedName>
    <alternativeName>
        <fullName evidence="1">Acetokinase</fullName>
    </alternativeName>
</protein>
<proteinExistence type="inferred from homology"/>
<accession>A2RC62</accession>
<sequence>MSKTIAINAGSSSLKWQLYQMPEEEVLAQGIIERIGLKDSISTVKYDGKKEEQILDIHDHTEAVKILLNDLIHFGIIAAYDEITGVGHRVVAGGELFKESVVVNDKVLEHIEELSVLAPLHNPGAAAGIRAFRDILPDITSVCVFDTSFHTSMAKHTYLYPIPQKYYTDYKVRKYGAHGTSHKYVAQEAAKMLGRPLEELKLITAHIGNGVSITANYHGKSVDTSMGFTPLAGPMMGTRSGDIDPAIIPYLIEQDPELKDAADVVNMLNKKSGLSGVSGISSDMRDIEAGLQEDNPDAVLAYNIFIDRIKKYIGQYFAVLNGADALVFTAGMGENAPLMRQDVIGGLTWFGMDIDPEKNVFGYRGDISTPESKVKVLVISTDEELCIARDVERLKNTK</sequence>
<reference key="1">
    <citation type="journal article" date="2007" name="J. Bacteriol.">
        <title>Complete genome of acute rheumatic fever-associated serotype M5 Streptococcus pyogenes strain Manfredo.</title>
        <authorList>
            <person name="Holden M.T.G."/>
            <person name="Scott A."/>
            <person name="Cherevach I."/>
            <person name="Chillingworth T."/>
            <person name="Churcher C."/>
            <person name="Cronin A."/>
            <person name="Dowd L."/>
            <person name="Feltwell T."/>
            <person name="Hamlin N."/>
            <person name="Holroyd S."/>
            <person name="Jagels K."/>
            <person name="Moule S."/>
            <person name="Mungall K."/>
            <person name="Quail M.A."/>
            <person name="Price C."/>
            <person name="Rabbinowitsch E."/>
            <person name="Sharp S."/>
            <person name="Skelton J."/>
            <person name="Whitehead S."/>
            <person name="Barrell B.G."/>
            <person name="Kehoe M."/>
            <person name="Parkhill J."/>
        </authorList>
    </citation>
    <scope>NUCLEOTIDE SEQUENCE [LARGE SCALE GENOMIC DNA]</scope>
    <source>
        <strain>Manfredo</strain>
    </source>
</reference>
<name>ACKA_STRPG</name>
<gene>
    <name evidence="1" type="primary">ackA</name>
    <name type="ordered locus">SpyM50092</name>
</gene>
<comment type="function">
    <text evidence="1">Catalyzes the formation of acetyl phosphate from acetate and ATP. Can also catalyze the reverse reaction.</text>
</comment>
<comment type="catalytic activity">
    <reaction evidence="1">
        <text>acetate + ATP = acetyl phosphate + ADP</text>
        <dbReference type="Rhea" id="RHEA:11352"/>
        <dbReference type="ChEBI" id="CHEBI:22191"/>
        <dbReference type="ChEBI" id="CHEBI:30089"/>
        <dbReference type="ChEBI" id="CHEBI:30616"/>
        <dbReference type="ChEBI" id="CHEBI:456216"/>
        <dbReference type="EC" id="2.7.2.1"/>
    </reaction>
</comment>
<comment type="cofactor">
    <cofactor evidence="1">
        <name>Mg(2+)</name>
        <dbReference type="ChEBI" id="CHEBI:18420"/>
    </cofactor>
    <cofactor evidence="1">
        <name>Mn(2+)</name>
        <dbReference type="ChEBI" id="CHEBI:29035"/>
    </cofactor>
    <text evidence="1">Mg(2+). Can also accept Mn(2+).</text>
</comment>
<comment type="pathway">
    <text evidence="1">Metabolic intermediate biosynthesis; acetyl-CoA biosynthesis; acetyl-CoA from acetate: step 1/2.</text>
</comment>
<comment type="subunit">
    <text evidence="1">Homodimer.</text>
</comment>
<comment type="subcellular location">
    <subcellularLocation>
        <location evidence="1">Cytoplasm</location>
    </subcellularLocation>
</comment>
<comment type="similarity">
    <text evidence="1">Belongs to the acetokinase family.</text>
</comment>